<accession>Q9S7L9</accession>
<accession>Q8LCP1</accession>
<protein>
    <recommendedName>
        <fullName>Cytochrome c oxidase subunit 6b-1</fullName>
        <shortName>AtCOX6b-1</shortName>
    </recommendedName>
</protein>
<proteinExistence type="evidence at protein level"/>
<comment type="function">
    <text>This protein is one of the nuclear-coded polypeptide chains of cytochrome c oxidase, the terminal oxidase in mitochondrial electron transport. This protein may be one of the heme-binding subunits of the oxidase.</text>
</comment>
<comment type="subcellular location">
    <subcellularLocation>
        <location evidence="1">Mitochondrion</location>
    </subcellularLocation>
</comment>
<comment type="tissue specificity">
    <text evidence="4">Expressed in the whole plant.</text>
</comment>
<comment type="developmental stage">
    <text evidence="5">Gradually expressed after germination.</text>
</comment>
<comment type="similarity">
    <text evidence="6">Belongs to the cytochrome c oxidase subunit 6B (TC 3.D.4.8) family.</text>
</comment>
<gene>
    <name type="primary">COX6B-1</name>
    <name type="ordered locus">At1g22450</name>
    <name type="ORF">F12K8.20</name>
</gene>
<sequence length="191" mass="21195">MADAVNAQTPSLSEQYHLEKEVKQDTSAKPVEVKEVAPEVTTQAEEVKTEQAKEESPVEEAVSVVEEKSESAPESTEVASEAPAAAEDNAEETPAAAEENNDENASEEVAEETPDEIKLETAPADFRFPTTNQTRHCFTRYVEYHRCVAAKGDDAPECDKFAKFYRSLCPSEWVDRWNEQRENGTFPGPLP</sequence>
<name>CX6B1_ARATH</name>
<reference key="1">
    <citation type="journal article" date="2001" name="Gene">
        <title>Characterization and expression of the genes for cytochrome c oxidase subunit VIb (COX6b) from rice and Arabidopsis thaliana.</title>
        <authorList>
            <person name="Ohtsu K."/>
            <person name="Nakazono M."/>
            <person name="Tsutsumi N."/>
            <person name="Hirai A."/>
        </authorList>
    </citation>
    <scope>NUCLEOTIDE SEQUENCE [MRNA]</scope>
    <scope>GENE FAMILY</scope>
    <scope>NOMENCLATURE</scope>
    <scope>TISSUE SPECIFICITY</scope>
</reference>
<reference key="2">
    <citation type="journal article" date="2000" name="Nature">
        <title>Sequence and analysis of chromosome 1 of the plant Arabidopsis thaliana.</title>
        <authorList>
            <person name="Theologis A."/>
            <person name="Ecker J.R."/>
            <person name="Palm C.J."/>
            <person name="Federspiel N.A."/>
            <person name="Kaul S."/>
            <person name="White O."/>
            <person name="Alonso J."/>
            <person name="Altafi H."/>
            <person name="Araujo R."/>
            <person name="Bowman C.L."/>
            <person name="Brooks S.Y."/>
            <person name="Buehler E."/>
            <person name="Chan A."/>
            <person name="Chao Q."/>
            <person name="Chen H."/>
            <person name="Cheuk R.F."/>
            <person name="Chin C.W."/>
            <person name="Chung M.K."/>
            <person name="Conn L."/>
            <person name="Conway A.B."/>
            <person name="Conway A.R."/>
            <person name="Creasy T.H."/>
            <person name="Dewar K."/>
            <person name="Dunn P."/>
            <person name="Etgu P."/>
            <person name="Feldblyum T.V."/>
            <person name="Feng J.-D."/>
            <person name="Fong B."/>
            <person name="Fujii C.Y."/>
            <person name="Gill J.E."/>
            <person name="Goldsmith A.D."/>
            <person name="Haas B."/>
            <person name="Hansen N.F."/>
            <person name="Hughes B."/>
            <person name="Huizar L."/>
            <person name="Hunter J.L."/>
            <person name="Jenkins J."/>
            <person name="Johnson-Hopson C."/>
            <person name="Khan S."/>
            <person name="Khaykin E."/>
            <person name="Kim C.J."/>
            <person name="Koo H.L."/>
            <person name="Kremenetskaia I."/>
            <person name="Kurtz D.B."/>
            <person name="Kwan A."/>
            <person name="Lam B."/>
            <person name="Langin-Hooper S."/>
            <person name="Lee A."/>
            <person name="Lee J.M."/>
            <person name="Lenz C.A."/>
            <person name="Li J.H."/>
            <person name="Li Y.-P."/>
            <person name="Lin X."/>
            <person name="Liu S.X."/>
            <person name="Liu Z.A."/>
            <person name="Luros J.S."/>
            <person name="Maiti R."/>
            <person name="Marziali A."/>
            <person name="Militscher J."/>
            <person name="Miranda M."/>
            <person name="Nguyen M."/>
            <person name="Nierman W.C."/>
            <person name="Osborne B.I."/>
            <person name="Pai G."/>
            <person name="Peterson J."/>
            <person name="Pham P.K."/>
            <person name="Rizzo M."/>
            <person name="Rooney T."/>
            <person name="Rowley D."/>
            <person name="Sakano H."/>
            <person name="Salzberg S.L."/>
            <person name="Schwartz J.R."/>
            <person name="Shinn P."/>
            <person name="Southwick A.M."/>
            <person name="Sun H."/>
            <person name="Tallon L.J."/>
            <person name="Tambunga G."/>
            <person name="Toriumi M.J."/>
            <person name="Town C.D."/>
            <person name="Utterback T."/>
            <person name="Van Aken S."/>
            <person name="Vaysberg M."/>
            <person name="Vysotskaia V.S."/>
            <person name="Walker M."/>
            <person name="Wu D."/>
            <person name="Yu G."/>
            <person name="Fraser C.M."/>
            <person name="Venter J.C."/>
            <person name="Davis R.W."/>
        </authorList>
    </citation>
    <scope>NUCLEOTIDE SEQUENCE [LARGE SCALE GENOMIC DNA]</scope>
    <source>
        <strain>cv. Columbia</strain>
    </source>
</reference>
<reference key="3">
    <citation type="journal article" date="2017" name="Plant J.">
        <title>Araport11: a complete reannotation of the Arabidopsis thaliana reference genome.</title>
        <authorList>
            <person name="Cheng C.Y."/>
            <person name="Krishnakumar V."/>
            <person name="Chan A.P."/>
            <person name="Thibaud-Nissen F."/>
            <person name="Schobel S."/>
            <person name="Town C.D."/>
        </authorList>
    </citation>
    <scope>GENOME REANNOTATION</scope>
    <source>
        <strain>cv. Columbia</strain>
    </source>
</reference>
<reference key="4">
    <citation type="journal article" date="2003" name="Science">
        <title>Empirical analysis of transcriptional activity in the Arabidopsis genome.</title>
        <authorList>
            <person name="Yamada K."/>
            <person name="Lim J."/>
            <person name="Dale J.M."/>
            <person name="Chen H."/>
            <person name="Shinn P."/>
            <person name="Palm C.J."/>
            <person name="Southwick A.M."/>
            <person name="Wu H.C."/>
            <person name="Kim C.J."/>
            <person name="Nguyen M."/>
            <person name="Pham P.K."/>
            <person name="Cheuk R.F."/>
            <person name="Karlin-Newmann G."/>
            <person name="Liu S.X."/>
            <person name="Lam B."/>
            <person name="Sakano H."/>
            <person name="Wu T."/>
            <person name="Yu G."/>
            <person name="Miranda M."/>
            <person name="Quach H.L."/>
            <person name="Tripp M."/>
            <person name="Chang C.H."/>
            <person name="Lee J.M."/>
            <person name="Toriumi M.J."/>
            <person name="Chan M.M."/>
            <person name="Tang C.C."/>
            <person name="Onodera C.S."/>
            <person name="Deng J.M."/>
            <person name="Akiyama K."/>
            <person name="Ansari Y."/>
            <person name="Arakawa T."/>
            <person name="Banh J."/>
            <person name="Banno F."/>
            <person name="Bowser L."/>
            <person name="Brooks S.Y."/>
            <person name="Carninci P."/>
            <person name="Chao Q."/>
            <person name="Choy N."/>
            <person name="Enju A."/>
            <person name="Goldsmith A.D."/>
            <person name="Gurjal M."/>
            <person name="Hansen N.F."/>
            <person name="Hayashizaki Y."/>
            <person name="Johnson-Hopson C."/>
            <person name="Hsuan V.W."/>
            <person name="Iida K."/>
            <person name="Karnes M."/>
            <person name="Khan S."/>
            <person name="Koesema E."/>
            <person name="Ishida J."/>
            <person name="Jiang P.X."/>
            <person name="Jones T."/>
            <person name="Kawai J."/>
            <person name="Kamiya A."/>
            <person name="Meyers C."/>
            <person name="Nakajima M."/>
            <person name="Narusaka M."/>
            <person name="Seki M."/>
            <person name="Sakurai T."/>
            <person name="Satou M."/>
            <person name="Tamse R."/>
            <person name="Vaysberg M."/>
            <person name="Wallender E.K."/>
            <person name="Wong C."/>
            <person name="Yamamura Y."/>
            <person name="Yuan S."/>
            <person name="Shinozaki K."/>
            <person name="Davis R.W."/>
            <person name="Theologis A."/>
            <person name="Ecker J.R."/>
        </authorList>
    </citation>
    <scope>NUCLEOTIDE SEQUENCE [LARGE SCALE MRNA]</scope>
    <source>
        <strain>cv. Columbia</strain>
    </source>
</reference>
<reference key="5">
    <citation type="submission" date="2002-03" db="EMBL/GenBank/DDBJ databases">
        <title>Full-length cDNA from Arabidopsis thaliana.</title>
        <authorList>
            <person name="Brover V.V."/>
            <person name="Troukhan M.E."/>
            <person name="Alexandrov N.A."/>
            <person name="Lu Y.-P."/>
            <person name="Flavell R.B."/>
            <person name="Feldmann K.A."/>
        </authorList>
    </citation>
    <scope>NUCLEOTIDE SEQUENCE [LARGE SCALE MRNA]</scope>
</reference>
<reference key="6">
    <citation type="journal article" date="2001" name="Genes Genet. Syst.">
        <title>The gene for alternative oxidase-2 (AOX2) from Arabidopsis thaliana consists of five exons unlike other AOX genes and is transcribed at an early stage during germination.</title>
        <authorList>
            <person name="Saisho D."/>
            <person name="Nakazono M."/>
            <person name="Lee K.-H."/>
            <person name="Tsutsumi N."/>
            <person name="Akita S."/>
            <person name="Hirai A."/>
        </authorList>
    </citation>
    <scope>DEVELOPMENTAL STAGE</scope>
</reference>
<reference key="7">
    <citation type="journal article" date="2012" name="Mol. Cell. Proteomics">
        <title>Comparative large-scale characterisation of plant vs. mammal proteins reveals similar and idiosyncratic N-alpha acetylation features.</title>
        <authorList>
            <person name="Bienvenut W.V."/>
            <person name="Sumpton D."/>
            <person name="Martinez A."/>
            <person name="Lilla S."/>
            <person name="Espagne C."/>
            <person name="Meinnel T."/>
            <person name="Giglione C."/>
        </authorList>
    </citation>
    <scope>ACETYLATION [LARGE SCALE ANALYSIS] AT ALA-2</scope>
    <scope>CLEAVAGE OF INITIATOR METHIONINE [LARGE SCALE ANALYSIS]</scope>
    <scope>IDENTIFICATION BY MASS SPECTROMETRY [LARGE SCALE ANALYSIS]</scope>
</reference>
<evidence type="ECO:0000250" key="1"/>
<evidence type="ECO:0000255" key="2">
    <source>
        <dbReference type="PROSITE-ProRule" id="PRU01150"/>
    </source>
</evidence>
<evidence type="ECO:0000256" key="3">
    <source>
        <dbReference type="SAM" id="MobiDB-lite"/>
    </source>
</evidence>
<evidence type="ECO:0000269" key="4">
    <source>
    </source>
</evidence>
<evidence type="ECO:0000269" key="5">
    <source>
    </source>
</evidence>
<evidence type="ECO:0000305" key="6"/>
<evidence type="ECO:0007744" key="7">
    <source>
    </source>
</evidence>
<organism>
    <name type="scientific">Arabidopsis thaliana</name>
    <name type="common">Mouse-ear cress</name>
    <dbReference type="NCBI Taxonomy" id="3702"/>
    <lineage>
        <taxon>Eukaryota</taxon>
        <taxon>Viridiplantae</taxon>
        <taxon>Streptophyta</taxon>
        <taxon>Embryophyta</taxon>
        <taxon>Tracheophyta</taxon>
        <taxon>Spermatophyta</taxon>
        <taxon>Magnoliopsida</taxon>
        <taxon>eudicotyledons</taxon>
        <taxon>Gunneridae</taxon>
        <taxon>Pentapetalae</taxon>
        <taxon>rosids</taxon>
        <taxon>malvids</taxon>
        <taxon>Brassicales</taxon>
        <taxon>Brassicaceae</taxon>
        <taxon>Camelineae</taxon>
        <taxon>Arabidopsis</taxon>
    </lineage>
</organism>
<dbReference type="EMBL" id="AB035444">
    <property type="protein sequence ID" value="BAA87883.1"/>
    <property type="molecule type" value="mRNA"/>
</dbReference>
<dbReference type="EMBL" id="AC006551">
    <property type="protein sequence ID" value="AAF18532.1"/>
    <property type="molecule type" value="Genomic_DNA"/>
</dbReference>
<dbReference type="EMBL" id="CP002684">
    <property type="protein sequence ID" value="AEE30243.1"/>
    <property type="molecule type" value="Genomic_DNA"/>
</dbReference>
<dbReference type="EMBL" id="AY063997">
    <property type="protein sequence ID" value="AAL36353.1"/>
    <property type="molecule type" value="mRNA"/>
</dbReference>
<dbReference type="EMBL" id="AY096696">
    <property type="protein sequence ID" value="AAM20330.1"/>
    <property type="molecule type" value="mRNA"/>
</dbReference>
<dbReference type="EMBL" id="AY086483">
    <property type="protein sequence ID" value="AAM63485.1"/>
    <property type="molecule type" value="mRNA"/>
</dbReference>
<dbReference type="PIR" id="F86357">
    <property type="entry name" value="F86357"/>
</dbReference>
<dbReference type="SMR" id="Q9S7L9"/>
<dbReference type="BioGRID" id="24090">
    <property type="interactions" value="1"/>
</dbReference>
<dbReference type="FunCoup" id="Q9S7L9">
    <property type="interactions" value="756"/>
</dbReference>
<dbReference type="IntAct" id="Q9S7L9">
    <property type="interactions" value="1"/>
</dbReference>
<dbReference type="STRING" id="3702.Q9S7L9"/>
<dbReference type="iPTMnet" id="Q9S7L9"/>
<dbReference type="PaxDb" id="3702-AT1G22450.1"/>
<dbReference type="ProteomicsDB" id="220429"/>
<dbReference type="EnsemblPlants" id="AT1G22450.1">
    <property type="protein sequence ID" value="AT1G22450.1"/>
    <property type="gene ID" value="AT1G22450"/>
</dbReference>
<dbReference type="GeneID" id="838851"/>
<dbReference type="Gramene" id="AT1G22450.1">
    <property type="protein sequence ID" value="AT1G22450.1"/>
    <property type="gene ID" value="AT1G22450"/>
</dbReference>
<dbReference type="KEGG" id="ath:AT1G22450"/>
<dbReference type="Araport" id="AT1G22450"/>
<dbReference type="TAIR" id="AT1G22450">
    <property type="gene designation" value="COX6B"/>
</dbReference>
<dbReference type="eggNOG" id="KOG3057">
    <property type="taxonomic scope" value="Eukaryota"/>
</dbReference>
<dbReference type="HOGENOM" id="CLU_084057_0_0_1"/>
<dbReference type="InParanoid" id="Q9S7L9"/>
<dbReference type="OMA" id="SWNEQRE"/>
<dbReference type="OrthoDB" id="1110943at2759"/>
<dbReference type="CD-CODE" id="4299E36E">
    <property type="entry name" value="Nucleolus"/>
</dbReference>
<dbReference type="PRO" id="PR:Q9S7L9"/>
<dbReference type="Proteomes" id="UP000006548">
    <property type="component" value="Chromosome 1"/>
</dbReference>
<dbReference type="ExpressionAtlas" id="Q9S7L9">
    <property type="expression patterns" value="baseline and differential"/>
</dbReference>
<dbReference type="GO" id="GO:0009535">
    <property type="term" value="C:chloroplast thylakoid membrane"/>
    <property type="evidence" value="ECO:0007005"/>
    <property type="project" value="TAIR"/>
</dbReference>
<dbReference type="GO" id="GO:0005739">
    <property type="term" value="C:mitochondrion"/>
    <property type="evidence" value="ECO:0007005"/>
    <property type="project" value="TAIR"/>
</dbReference>
<dbReference type="GO" id="GO:0005634">
    <property type="term" value="C:nucleus"/>
    <property type="evidence" value="ECO:0007005"/>
    <property type="project" value="TAIR"/>
</dbReference>
<dbReference type="GO" id="GO:0045277">
    <property type="term" value="C:respiratory chain complex IV"/>
    <property type="evidence" value="ECO:0007669"/>
    <property type="project" value="InterPro"/>
</dbReference>
<dbReference type="GO" id="GO:0009579">
    <property type="term" value="C:thylakoid"/>
    <property type="evidence" value="ECO:0007005"/>
    <property type="project" value="TAIR"/>
</dbReference>
<dbReference type="GO" id="GO:0005507">
    <property type="term" value="F:copper ion binding"/>
    <property type="evidence" value="ECO:0007005"/>
    <property type="project" value="TAIR"/>
</dbReference>
<dbReference type="CDD" id="cd00926">
    <property type="entry name" value="Cyt_c_Oxidase_VIb"/>
    <property type="match status" value="1"/>
</dbReference>
<dbReference type="FunFam" id="1.10.10.140:FF:000004">
    <property type="entry name" value="Cytochrome c oxidase subunit"/>
    <property type="match status" value="1"/>
</dbReference>
<dbReference type="Gene3D" id="1.10.10.140">
    <property type="entry name" value="Cytochrome c oxidase, subunit VIb"/>
    <property type="match status" value="1"/>
</dbReference>
<dbReference type="InterPro" id="IPR048280">
    <property type="entry name" value="COX6B-like"/>
</dbReference>
<dbReference type="InterPro" id="IPR036549">
    <property type="entry name" value="CX6/COA6-like_sf"/>
</dbReference>
<dbReference type="InterPro" id="IPR003213">
    <property type="entry name" value="Cyt_c_oxidase_su6B"/>
</dbReference>
<dbReference type="PANTHER" id="PTHR46281">
    <property type="entry name" value="CYTOCHROME C OXIDASE SUBUNIT 6B"/>
    <property type="match status" value="1"/>
</dbReference>
<dbReference type="PANTHER" id="PTHR46281:SF2">
    <property type="entry name" value="CYTOCHROME C OXIDASE SUBUNIT 6B-1"/>
    <property type="match status" value="1"/>
</dbReference>
<dbReference type="Pfam" id="PF02297">
    <property type="entry name" value="COX6B"/>
    <property type="match status" value="1"/>
</dbReference>
<dbReference type="SUPFAM" id="SSF47694">
    <property type="entry name" value="Cytochrome c oxidase subunit h"/>
    <property type="match status" value="1"/>
</dbReference>
<dbReference type="PROSITE" id="PS51808">
    <property type="entry name" value="CHCH"/>
    <property type="match status" value="1"/>
</dbReference>
<feature type="initiator methionine" description="Removed" evidence="7">
    <location>
        <position position="1"/>
    </location>
</feature>
<feature type="chain" id="PRO_0000412233" description="Cytochrome c oxidase subunit 6b-1">
    <location>
        <begin position="2"/>
        <end position="191"/>
    </location>
</feature>
<feature type="domain" description="CHCH" evidence="2">
    <location>
        <begin position="134"/>
        <end position="177"/>
    </location>
</feature>
<feature type="region of interest" description="Disordered" evidence="3">
    <location>
        <begin position="1"/>
        <end position="126"/>
    </location>
</feature>
<feature type="short sequence motif" description="Cx9C motif" evidence="2">
    <location>
        <begin position="137"/>
        <end position="147"/>
    </location>
</feature>
<feature type="short sequence motif" description="Cx10C motif" evidence="2">
    <location>
        <begin position="158"/>
        <end position="169"/>
    </location>
</feature>
<feature type="compositionally biased region" description="Polar residues" evidence="3">
    <location>
        <begin position="1"/>
        <end position="14"/>
    </location>
</feature>
<feature type="compositionally biased region" description="Basic and acidic residues" evidence="3">
    <location>
        <begin position="16"/>
        <end position="37"/>
    </location>
</feature>
<feature type="compositionally biased region" description="Basic and acidic residues" evidence="3">
    <location>
        <begin position="45"/>
        <end position="56"/>
    </location>
</feature>
<feature type="compositionally biased region" description="Low complexity" evidence="3">
    <location>
        <begin position="72"/>
        <end position="98"/>
    </location>
</feature>
<feature type="compositionally biased region" description="Acidic residues" evidence="3">
    <location>
        <begin position="99"/>
        <end position="114"/>
    </location>
</feature>
<feature type="modified residue" description="N-acetylalanine" evidence="7">
    <location>
        <position position="2"/>
    </location>
</feature>
<feature type="disulfide bond" evidence="2">
    <location>
        <begin position="137"/>
        <end position="169"/>
    </location>
</feature>
<feature type="disulfide bond" evidence="2">
    <location>
        <begin position="147"/>
        <end position="158"/>
    </location>
</feature>
<feature type="sequence conflict" description="In Ref. 5; AAM63485." evidence="6" ref="5">
    <original>E</original>
    <variation>Q</variation>
    <location>
        <position position="87"/>
    </location>
</feature>
<keyword id="KW-0007">Acetylation</keyword>
<keyword id="KW-1015">Disulfide bond</keyword>
<keyword id="KW-0496">Mitochondrion</keyword>
<keyword id="KW-1185">Reference proteome</keyword>